<comment type="function">
    <text evidence="3 4">May function as part of axonemal radial spoke complexes that play an important part in the motility of sperm and cilia (By similarity). Functions as a protein kinase A-anchoring protein that scaffolds the cAMP-dependent protein kinase holoenzyme. May serve as a point of convergence for MAPK and PKA signaling in cilia (By similarity).</text>
</comment>
<comment type="subunit">
    <text evidence="3 4 7 8">May be a component of axonemal radial spokes (By similarity). Interacts with IQUB (By similarity). Interacts with phosphorylated MAPK1. Interacts with MEK1. Interacts with PKA regulatory subunits PRKAR1A and PRKAR1B (By similarity). Interacts with RSPH1. Interacts with RSPH4A. Interacts with RSPH6A. Interacts with RSPH9 (By similarity). Interacts with CFAP61 (PubMed:34792097). Interacts with LRRC23 (PubMed:34585727).</text>
</comment>
<comment type="subcellular location">
    <subcellularLocation>
        <location evidence="2">Cytoplasm</location>
        <location evidence="2">Cytoskeleton</location>
        <location evidence="2">Cilium axoneme</location>
    </subcellularLocation>
    <subcellularLocation>
        <location evidence="9">Cytoplasm</location>
        <location evidence="9">Cytoskeleton</location>
        <location evidence="9">Flagellum axoneme</location>
    </subcellularLocation>
</comment>
<comment type="similarity">
    <text evidence="9">Belongs to the flagellar radial spoke RSP3 family.</text>
</comment>
<comment type="sequence caution" evidence="9">
    <conflict type="frameshift">
        <sequence resource="EMBL-CDS" id="BAB25385"/>
    </conflict>
</comment>
<keyword id="KW-0966">Cell projection</keyword>
<keyword id="KW-0969">Cilium</keyword>
<keyword id="KW-0175">Coiled coil</keyword>
<keyword id="KW-0963">Cytoplasm</keyword>
<keyword id="KW-0206">Cytoskeleton</keyword>
<keyword id="KW-0282">Flagellum</keyword>
<keyword id="KW-0597">Phosphoprotein</keyword>
<keyword id="KW-1185">Reference proteome</keyword>
<gene>
    <name type="primary">Rsph3a</name>
    <name type="synonym">Rshl2</name>
    <name type="synonym">Rshl2a</name>
</gene>
<sequence>MAATNIWAALPAKKRPLHQRARRPAGGRGREPEVPFTTDPSGNPAGRNCLEFLPPGGTSGCSATDGGATVPLALRPFLRERRPLGSQHPCPWHYLQVSDYDDSLAPTCFRAHLHRRGSSSTLNQASAMTDPNPRTAEASGLYTYSSRPRAVACQRRRHRDSILQPVEEPMSYGNIMYDRRVIRGNTYALPTGQVPGQPDPLELQRQQQARRRALARKRAQEQLKPRTPEPVEGRKHVDIQTELYLEEIADRIVEVDMECQTDAFLDRPPTPLFIPAKTGKDVATQILGGELFDFDLEVKPMLEVLVGKTIEQSLLEVMEEEELANLRARQYAYEEIRNVELAEVQRLEEQERRHREEKERRKKQQWEIVHKRNETLQKISALIFARQYLANLLPSVFDKLRNSGFFYDPIERDIEVGFLPWLMNEVEKSMEHSMVGRTVLDMLIRDVVERRINDYEHKEAMPPGQKTNVINGPNTVTDPSVTTLHTQKPVLDRVSSQPAPSQERKPVEEGGHLMAE</sequence>
<name>RSH3A_MOUSE</name>
<protein>
    <recommendedName>
        <fullName>Radial spoke head protein 3 homolog A</fullName>
    </recommendedName>
    <alternativeName>
        <fullName>A-kinase anchor protein RSPH3A</fullName>
    </alternativeName>
    <alternativeName>
        <fullName>Radial spoke head-like protein 2A</fullName>
    </alternativeName>
</protein>
<accession>Q3UFY4</accession>
<accession>Q9D8J2</accession>
<proteinExistence type="evidence at protein level"/>
<dbReference type="EMBL" id="AK007979">
    <property type="protein sequence ID" value="BAB25385.1"/>
    <property type="status" value="ALT_FRAME"/>
    <property type="molecule type" value="mRNA"/>
</dbReference>
<dbReference type="EMBL" id="AK148230">
    <property type="protein sequence ID" value="BAE28425.1"/>
    <property type="molecule type" value="mRNA"/>
</dbReference>
<dbReference type="CCDS" id="CCDS49943.1"/>
<dbReference type="RefSeq" id="NP_080065.4">
    <property type="nucleotide sequence ID" value="NM_025789.5"/>
</dbReference>
<dbReference type="SMR" id="Q3UFY4"/>
<dbReference type="BioGRID" id="211749">
    <property type="interactions" value="2"/>
</dbReference>
<dbReference type="ComplexPortal" id="CPX-8161">
    <property type="entry name" value="Radial spoke complex, ciliiar variant"/>
</dbReference>
<dbReference type="ComplexPortal" id="CPX-8162">
    <property type="entry name" value="Radial spoke complex, flagellar variant"/>
</dbReference>
<dbReference type="FunCoup" id="Q3UFY4">
    <property type="interactions" value="96"/>
</dbReference>
<dbReference type="STRING" id="10090.ENSMUSP00000095034"/>
<dbReference type="iPTMnet" id="Q3UFY4"/>
<dbReference type="PhosphoSitePlus" id="Q3UFY4"/>
<dbReference type="PaxDb" id="10090-ENSMUSP00000095034"/>
<dbReference type="ProteomicsDB" id="257044"/>
<dbReference type="DNASU" id="66832"/>
<dbReference type="Ensembl" id="ENSMUST00000097423.3">
    <property type="protein sequence ID" value="ENSMUSP00000095034.3"/>
    <property type="gene ID" value="ENSMUSG00000073471.4"/>
</dbReference>
<dbReference type="GeneID" id="66832"/>
<dbReference type="KEGG" id="mmu:66832"/>
<dbReference type="UCSC" id="uc008ait.2">
    <property type="organism name" value="mouse"/>
</dbReference>
<dbReference type="AGR" id="MGI:1914082"/>
<dbReference type="CTD" id="66832"/>
<dbReference type="MGI" id="MGI:1914082">
    <property type="gene designation" value="Rsph3a"/>
</dbReference>
<dbReference type="VEuPathDB" id="HostDB:ENSMUSG00000073471"/>
<dbReference type="eggNOG" id="ENOG502QQSZ">
    <property type="taxonomic scope" value="Eukaryota"/>
</dbReference>
<dbReference type="GeneTree" id="ENSGT00390000004172"/>
<dbReference type="HOGENOM" id="CLU_036980_4_1_1"/>
<dbReference type="InParanoid" id="Q3UFY4"/>
<dbReference type="OMA" id="CPWHYVH"/>
<dbReference type="OrthoDB" id="82903at9989"/>
<dbReference type="PhylomeDB" id="Q3UFY4"/>
<dbReference type="TreeFam" id="TF324184"/>
<dbReference type="BioGRID-ORCS" id="66832">
    <property type="hits" value="2 hits in 75 CRISPR screens"/>
</dbReference>
<dbReference type="ChiTaRS" id="Rsph3a">
    <property type="organism name" value="mouse"/>
</dbReference>
<dbReference type="PRO" id="PR:Q3UFY4"/>
<dbReference type="Proteomes" id="UP000000589">
    <property type="component" value="Chromosome 17"/>
</dbReference>
<dbReference type="RNAct" id="Q3UFY4">
    <property type="molecule type" value="protein"/>
</dbReference>
<dbReference type="Bgee" id="ENSMUSG00000073471">
    <property type="expression patterns" value="Expressed in testis and 73 other cell types or tissues"/>
</dbReference>
<dbReference type="ExpressionAtlas" id="Q3UFY4">
    <property type="expression patterns" value="baseline and differential"/>
</dbReference>
<dbReference type="GO" id="GO:0097729">
    <property type="term" value="C:9+2 motile cilium"/>
    <property type="evidence" value="ECO:0000250"/>
    <property type="project" value="UniProtKB"/>
</dbReference>
<dbReference type="GO" id="GO:0001535">
    <property type="term" value="C:radial spoke head"/>
    <property type="evidence" value="ECO:0000250"/>
    <property type="project" value="UniProtKB"/>
</dbReference>
<dbReference type="InterPro" id="IPR009290">
    <property type="entry name" value="Radial_spoke_3"/>
</dbReference>
<dbReference type="PANTHER" id="PTHR21648">
    <property type="entry name" value="FLAGELLAR RADIAL SPOKE PROTEIN 3"/>
    <property type="match status" value="1"/>
</dbReference>
<dbReference type="PANTHER" id="PTHR21648:SF0">
    <property type="entry name" value="RADIAL SPOKE HEAD PROTEIN 3 HOMOLOG"/>
    <property type="match status" value="1"/>
</dbReference>
<dbReference type="Pfam" id="PF06098">
    <property type="entry name" value="Radial_spoke_3"/>
    <property type="match status" value="1"/>
</dbReference>
<evidence type="ECO:0000250" key="1"/>
<evidence type="ECO:0000250" key="2">
    <source>
        <dbReference type="UniProtKB" id="P12759"/>
    </source>
</evidence>
<evidence type="ECO:0000250" key="3">
    <source>
        <dbReference type="UniProtKB" id="Q86UC2"/>
    </source>
</evidence>
<evidence type="ECO:0000250" key="4">
    <source>
        <dbReference type="UniProtKB" id="Q9DA80"/>
    </source>
</evidence>
<evidence type="ECO:0000255" key="5"/>
<evidence type="ECO:0000256" key="6">
    <source>
        <dbReference type="SAM" id="MobiDB-lite"/>
    </source>
</evidence>
<evidence type="ECO:0000269" key="7">
    <source>
    </source>
</evidence>
<evidence type="ECO:0000269" key="8">
    <source>
    </source>
</evidence>
<evidence type="ECO:0000305" key="9"/>
<feature type="chain" id="PRO_0000313742" description="Radial spoke head protein 3 homolog A">
    <location>
        <begin position="1"/>
        <end position="516"/>
    </location>
</feature>
<feature type="region of interest" description="Disordered" evidence="6">
    <location>
        <begin position="1"/>
        <end position="45"/>
    </location>
</feature>
<feature type="region of interest" description="Disordered" evidence="6">
    <location>
        <begin position="120"/>
        <end position="139"/>
    </location>
</feature>
<feature type="region of interest" description="Disordered" evidence="6">
    <location>
        <begin position="190"/>
        <end position="233"/>
    </location>
</feature>
<feature type="region of interest" description="Disordered" evidence="6">
    <location>
        <begin position="459"/>
        <end position="516"/>
    </location>
</feature>
<feature type="coiled-coil region" evidence="5">
    <location>
        <begin position="333"/>
        <end position="369"/>
    </location>
</feature>
<feature type="compositionally biased region" description="Basic residues" evidence="6">
    <location>
        <begin position="12"/>
        <end position="25"/>
    </location>
</feature>
<feature type="compositionally biased region" description="Polar residues" evidence="6">
    <location>
        <begin position="120"/>
        <end position="129"/>
    </location>
</feature>
<feature type="compositionally biased region" description="Basic residues" evidence="6">
    <location>
        <begin position="208"/>
        <end position="217"/>
    </location>
</feature>
<feature type="compositionally biased region" description="Basic and acidic residues" evidence="6">
    <location>
        <begin position="218"/>
        <end position="233"/>
    </location>
</feature>
<feature type="compositionally biased region" description="Polar residues" evidence="6">
    <location>
        <begin position="465"/>
        <end position="486"/>
    </location>
</feature>
<feature type="compositionally biased region" description="Basic and acidic residues" evidence="6">
    <location>
        <begin position="502"/>
        <end position="516"/>
    </location>
</feature>
<feature type="modified residue" description="Phosphothreonine; by MAPK1" evidence="1">
    <location>
        <position position="270"/>
    </location>
</feature>
<feature type="sequence conflict" description="In Ref. 1; BAB25385." evidence="9" ref="1">
    <original>E</original>
    <variation>G</variation>
    <location>
        <position position="297"/>
    </location>
</feature>
<reference key="1">
    <citation type="journal article" date="2005" name="Science">
        <title>The transcriptional landscape of the mammalian genome.</title>
        <authorList>
            <person name="Carninci P."/>
            <person name="Kasukawa T."/>
            <person name="Katayama S."/>
            <person name="Gough J."/>
            <person name="Frith M.C."/>
            <person name="Maeda N."/>
            <person name="Oyama R."/>
            <person name="Ravasi T."/>
            <person name="Lenhard B."/>
            <person name="Wells C."/>
            <person name="Kodzius R."/>
            <person name="Shimokawa K."/>
            <person name="Bajic V.B."/>
            <person name="Brenner S.E."/>
            <person name="Batalov S."/>
            <person name="Forrest A.R."/>
            <person name="Zavolan M."/>
            <person name="Davis M.J."/>
            <person name="Wilming L.G."/>
            <person name="Aidinis V."/>
            <person name="Allen J.E."/>
            <person name="Ambesi-Impiombato A."/>
            <person name="Apweiler R."/>
            <person name="Aturaliya R.N."/>
            <person name="Bailey T.L."/>
            <person name="Bansal M."/>
            <person name="Baxter L."/>
            <person name="Beisel K.W."/>
            <person name="Bersano T."/>
            <person name="Bono H."/>
            <person name="Chalk A.M."/>
            <person name="Chiu K.P."/>
            <person name="Choudhary V."/>
            <person name="Christoffels A."/>
            <person name="Clutterbuck D.R."/>
            <person name="Crowe M.L."/>
            <person name="Dalla E."/>
            <person name="Dalrymple B.P."/>
            <person name="de Bono B."/>
            <person name="Della Gatta G."/>
            <person name="di Bernardo D."/>
            <person name="Down T."/>
            <person name="Engstrom P."/>
            <person name="Fagiolini M."/>
            <person name="Faulkner G."/>
            <person name="Fletcher C.F."/>
            <person name="Fukushima T."/>
            <person name="Furuno M."/>
            <person name="Futaki S."/>
            <person name="Gariboldi M."/>
            <person name="Georgii-Hemming P."/>
            <person name="Gingeras T.R."/>
            <person name="Gojobori T."/>
            <person name="Green R.E."/>
            <person name="Gustincich S."/>
            <person name="Harbers M."/>
            <person name="Hayashi Y."/>
            <person name="Hensch T.K."/>
            <person name="Hirokawa N."/>
            <person name="Hill D."/>
            <person name="Huminiecki L."/>
            <person name="Iacono M."/>
            <person name="Ikeo K."/>
            <person name="Iwama A."/>
            <person name="Ishikawa T."/>
            <person name="Jakt M."/>
            <person name="Kanapin A."/>
            <person name="Katoh M."/>
            <person name="Kawasawa Y."/>
            <person name="Kelso J."/>
            <person name="Kitamura H."/>
            <person name="Kitano H."/>
            <person name="Kollias G."/>
            <person name="Krishnan S.P."/>
            <person name="Kruger A."/>
            <person name="Kummerfeld S.K."/>
            <person name="Kurochkin I.V."/>
            <person name="Lareau L.F."/>
            <person name="Lazarevic D."/>
            <person name="Lipovich L."/>
            <person name="Liu J."/>
            <person name="Liuni S."/>
            <person name="McWilliam S."/>
            <person name="Madan Babu M."/>
            <person name="Madera M."/>
            <person name="Marchionni L."/>
            <person name="Matsuda H."/>
            <person name="Matsuzawa S."/>
            <person name="Miki H."/>
            <person name="Mignone F."/>
            <person name="Miyake S."/>
            <person name="Morris K."/>
            <person name="Mottagui-Tabar S."/>
            <person name="Mulder N."/>
            <person name="Nakano N."/>
            <person name="Nakauchi H."/>
            <person name="Ng P."/>
            <person name="Nilsson R."/>
            <person name="Nishiguchi S."/>
            <person name="Nishikawa S."/>
            <person name="Nori F."/>
            <person name="Ohara O."/>
            <person name="Okazaki Y."/>
            <person name="Orlando V."/>
            <person name="Pang K.C."/>
            <person name="Pavan W.J."/>
            <person name="Pavesi G."/>
            <person name="Pesole G."/>
            <person name="Petrovsky N."/>
            <person name="Piazza S."/>
            <person name="Reed J."/>
            <person name="Reid J.F."/>
            <person name="Ring B.Z."/>
            <person name="Ringwald M."/>
            <person name="Rost B."/>
            <person name="Ruan Y."/>
            <person name="Salzberg S.L."/>
            <person name="Sandelin A."/>
            <person name="Schneider C."/>
            <person name="Schoenbach C."/>
            <person name="Sekiguchi K."/>
            <person name="Semple C.A."/>
            <person name="Seno S."/>
            <person name="Sessa L."/>
            <person name="Sheng Y."/>
            <person name="Shibata Y."/>
            <person name="Shimada H."/>
            <person name="Shimada K."/>
            <person name="Silva D."/>
            <person name="Sinclair B."/>
            <person name="Sperling S."/>
            <person name="Stupka E."/>
            <person name="Sugiura K."/>
            <person name="Sultana R."/>
            <person name="Takenaka Y."/>
            <person name="Taki K."/>
            <person name="Tammoja K."/>
            <person name="Tan S.L."/>
            <person name="Tang S."/>
            <person name="Taylor M.S."/>
            <person name="Tegner J."/>
            <person name="Teichmann S.A."/>
            <person name="Ueda H.R."/>
            <person name="van Nimwegen E."/>
            <person name="Verardo R."/>
            <person name="Wei C.L."/>
            <person name="Yagi K."/>
            <person name="Yamanishi H."/>
            <person name="Zabarovsky E."/>
            <person name="Zhu S."/>
            <person name="Zimmer A."/>
            <person name="Hide W."/>
            <person name="Bult C."/>
            <person name="Grimmond S.M."/>
            <person name="Teasdale R.D."/>
            <person name="Liu E.T."/>
            <person name="Brusic V."/>
            <person name="Quackenbush J."/>
            <person name="Wahlestedt C."/>
            <person name="Mattick J.S."/>
            <person name="Hume D.A."/>
            <person name="Kai C."/>
            <person name="Sasaki D."/>
            <person name="Tomaru Y."/>
            <person name="Fukuda S."/>
            <person name="Kanamori-Katayama M."/>
            <person name="Suzuki M."/>
            <person name="Aoki J."/>
            <person name="Arakawa T."/>
            <person name="Iida J."/>
            <person name="Imamura K."/>
            <person name="Itoh M."/>
            <person name="Kato T."/>
            <person name="Kawaji H."/>
            <person name="Kawagashira N."/>
            <person name="Kawashima T."/>
            <person name="Kojima M."/>
            <person name="Kondo S."/>
            <person name="Konno H."/>
            <person name="Nakano K."/>
            <person name="Ninomiya N."/>
            <person name="Nishio T."/>
            <person name="Okada M."/>
            <person name="Plessy C."/>
            <person name="Shibata K."/>
            <person name="Shiraki T."/>
            <person name="Suzuki S."/>
            <person name="Tagami M."/>
            <person name="Waki K."/>
            <person name="Watahiki A."/>
            <person name="Okamura-Oho Y."/>
            <person name="Suzuki H."/>
            <person name="Kawai J."/>
            <person name="Hayashizaki Y."/>
        </authorList>
    </citation>
    <scope>NUCLEOTIDE SEQUENCE [LARGE SCALE MRNA]</scope>
    <source>
        <strain>C57BL/6J</strain>
        <tissue>Pancreas</tissue>
    </source>
</reference>
<reference key="2">
    <citation type="journal article" date="2021" name="Development">
        <title>CFAP61 is required for sperm flagellum formation and male fertility in human and mouse.</title>
        <authorList>
            <person name="Liu S."/>
            <person name="Zhang J."/>
            <person name="Kherraf Z.E."/>
            <person name="Sun S."/>
            <person name="Zhang X."/>
            <person name="Cazin C."/>
            <person name="Coutton C."/>
            <person name="Zouari R."/>
            <person name="Zhao S."/>
            <person name="Hu F."/>
            <person name="Fourati Ben Mustapha S."/>
            <person name="Arnoult C."/>
            <person name="Ray P.F."/>
            <person name="Liu M."/>
        </authorList>
    </citation>
    <scope>INTERACTION WITH CFAP61</scope>
</reference>
<reference key="3">
    <citation type="journal article" date="2021" name="J. Cell Sci.">
        <title>LRRC23 is a conserved component of the radial spoke that is necessary for sperm motility and male fertility in mice.</title>
        <authorList>
            <person name="Zhang X."/>
            <person name="Sun J."/>
            <person name="Lu Y."/>
            <person name="Zhang J."/>
            <person name="Shimada K."/>
            <person name="Noda T."/>
            <person name="Zhao S."/>
            <person name="Koyano T."/>
            <person name="Matsuyama M."/>
            <person name="Zhou S."/>
            <person name="Wu J."/>
            <person name="Ikawa M."/>
            <person name="Liu M."/>
        </authorList>
    </citation>
    <scope>INTERACTION WITH LRRC23</scope>
</reference>
<organism>
    <name type="scientific">Mus musculus</name>
    <name type="common">Mouse</name>
    <dbReference type="NCBI Taxonomy" id="10090"/>
    <lineage>
        <taxon>Eukaryota</taxon>
        <taxon>Metazoa</taxon>
        <taxon>Chordata</taxon>
        <taxon>Craniata</taxon>
        <taxon>Vertebrata</taxon>
        <taxon>Euteleostomi</taxon>
        <taxon>Mammalia</taxon>
        <taxon>Eutheria</taxon>
        <taxon>Euarchontoglires</taxon>
        <taxon>Glires</taxon>
        <taxon>Rodentia</taxon>
        <taxon>Myomorpha</taxon>
        <taxon>Muroidea</taxon>
        <taxon>Muridae</taxon>
        <taxon>Murinae</taxon>
        <taxon>Mus</taxon>
        <taxon>Mus</taxon>
    </lineage>
</organism>